<organism>
    <name type="scientific">Brucella abortus (strain 2308)</name>
    <dbReference type="NCBI Taxonomy" id="359391"/>
    <lineage>
        <taxon>Bacteria</taxon>
        <taxon>Pseudomonadati</taxon>
        <taxon>Pseudomonadota</taxon>
        <taxon>Alphaproteobacteria</taxon>
        <taxon>Hyphomicrobiales</taxon>
        <taxon>Brucellaceae</taxon>
        <taxon>Brucella/Ochrobactrum group</taxon>
        <taxon>Brucella</taxon>
    </lineage>
</organism>
<comment type="function">
    <text evidence="3">The virB operon is essential for intracellular survival and is not involved in the invasion process. Constitutes a major determinant of virulence in mice.</text>
</comment>
<comment type="miscellaneous">
    <text>Transcription is turned on at the beginning of the stationary phase of vegetative growth.</text>
</comment>
<comment type="similarity">
    <text evidence="4">Belongs to the virb5 family.</text>
</comment>
<sequence>MKKIILSFAFALTVTSTAHAQLPVTDAGSIAQNLANHLEQMVKFAQQIEQLKQQFEQQKMQFDALTGNRGLGDILRDPTLRSYLPHNWRDLYEAVMSGGYLAAAGETANLLRKSQVYDPCASISDKDQRIACEAKVVKPVQDKVMTSKAYDATDKRLQEIESLMQEINKTGDPKAIAELQGRIESENAMIQNEDTRLRLYQQMAEAQDKLLDERQHELDAKDNARRGYPQPKALEAAY</sequence>
<proteinExistence type="inferred from homology"/>
<name>VIRB5_BRUA2</name>
<evidence type="ECO:0000255" key="1"/>
<evidence type="ECO:0000256" key="2">
    <source>
        <dbReference type="SAM" id="MobiDB-lite"/>
    </source>
</evidence>
<evidence type="ECO:0000269" key="3">
    <source>
    </source>
</evidence>
<evidence type="ECO:0000305" key="4"/>
<feature type="signal peptide" evidence="1">
    <location>
        <begin position="1"/>
        <end position="20"/>
    </location>
</feature>
<feature type="chain" id="PRO_0000290176" description="Type IV secretion system protein virB5">
    <location>
        <begin position="21"/>
        <end position="238"/>
    </location>
</feature>
<feature type="region of interest" description="Disordered" evidence="2">
    <location>
        <begin position="219"/>
        <end position="238"/>
    </location>
</feature>
<gene>
    <name type="primary">virB5</name>
    <name type="ordered locus">BAB2_0064</name>
</gene>
<dbReference type="EMBL" id="AF226278">
    <property type="protein sequence ID" value="AAF73898.1"/>
    <property type="molecule type" value="Genomic_DNA"/>
</dbReference>
<dbReference type="EMBL" id="AM040265">
    <property type="protein sequence ID" value="CAJ12230.1"/>
    <property type="molecule type" value="Genomic_DNA"/>
</dbReference>
<dbReference type="RefSeq" id="WP_006077544.1">
    <property type="nucleotide sequence ID" value="NZ_KN046823.1"/>
</dbReference>
<dbReference type="SMR" id="Q2YJ75"/>
<dbReference type="IntAct" id="Q2YJ75">
    <property type="interactions" value="2"/>
</dbReference>
<dbReference type="STRING" id="359391.BAB2_0064"/>
<dbReference type="GeneID" id="93015958"/>
<dbReference type="KEGG" id="bmf:BAB2_0064"/>
<dbReference type="PATRIC" id="fig|359391.11.peg.2011"/>
<dbReference type="HOGENOM" id="CLU_096790_1_0_5"/>
<dbReference type="PhylomeDB" id="Q2YJ75"/>
<dbReference type="BioCyc" id="MetaCyc:BAB_RS26665-MONOMER"/>
<dbReference type="PRO" id="PR:Q2YJ75"/>
<dbReference type="Proteomes" id="UP000002719">
    <property type="component" value="Chromosome II"/>
</dbReference>
<dbReference type="CDD" id="cd14262">
    <property type="entry name" value="VirB5_like"/>
    <property type="match status" value="1"/>
</dbReference>
<dbReference type="Gene3D" id="1.20.58.430">
    <property type="entry name" value="Type IV secretion system, VirB5-domain"/>
    <property type="match status" value="1"/>
</dbReference>
<dbReference type="InterPro" id="IPR014158">
    <property type="entry name" value="T4SS_VirB5"/>
</dbReference>
<dbReference type="InterPro" id="IPR023220">
    <property type="entry name" value="T4SS_VirB5-domain"/>
</dbReference>
<dbReference type="NCBIfam" id="TIGR02791">
    <property type="entry name" value="VirB5"/>
    <property type="match status" value="1"/>
</dbReference>
<dbReference type="Pfam" id="PF07996">
    <property type="entry name" value="T4SS"/>
    <property type="match status" value="1"/>
</dbReference>
<dbReference type="SUPFAM" id="SSF101082">
    <property type="entry name" value="Typo IV secretion system protein TraC"/>
    <property type="match status" value="1"/>
</dbReference>
<keyword id="KW-1185">Reference proteome</keyword>
<keyword id="KW-0732">Signal</keyword>
<keyword id="KW-0843">Virulence</keyword>
<protein>
    <recommendedName>
        <fullName>Type IV secretion system protein virB5</fullName>
    </recommendedName>
</protein>
<accession>Q2YJ75</accession>
<accession>Q9KIS8</accession>
<reference key="1">
    <citation type="journal article" date="2000" name="J. Bacteriol.">
        <title>A homologue of an operon required for DNA transfer in Agrobacterium is required in Brucella abortus for virulence and intracellular multiplication.</title>
        <authorList>
            <person name="Sieira R."/>
            <person name="Comerci D.J."/>
            <person name="Sanchez D.O."/>
            <person name="Ugalde R.A."/>
        </authorList>
    </citation>
    <scope>NUCLEOTIDE SEQUENCE [GENOMIC DNA]</scope>
    <scope>TRANSCRIPTION</scope>
    <scope>FUNCTION</scope>
</reference>
<reference key="2">
    <citation type="journal article" date="2005" name="Infect. Immun.">
        <title>Whole-genome analyses of speciation events in pathogenic Brucellae.</title>
        <authorList>
            <person name="Chain P.S."/>
            <person name="Comerci D.J."/>
            <person name="Tolmasky M.E."/>
            <person name="Larimer F.W."/>
            <person name="Malfatti S.A."/>
            <person name="Vergez L.M."/>
            <person name="Aguero F."/>
            <person name="Land M.L."/>
            <person name="Ugalde R.A."/>
            <person name="Garcia E."/>
        </authorList>
    </citation>
    <scope>NUCLEOTIDE SEQUENCE [LARGE SCALE GENOMIC DNA]</scope>
    <source>
        <strain>2308</strain>
    </source>
</reference>